<protein>
    <recommendedName>
        <fullName evidence="7">Probable beta-1,4-xylosyltransferase IRX9L</fullName>
        <ecNumber evidence="7">2.4.2.-</ecNumber>
    </recommendedName>
    <alternativeName>
        <fullName evidence="6">OsGT43F</fullName>
    </alternativeName>
    <alternativeName>
        <fullName evidence="7">Probable glucuronosyltransferase Os01g0675500</fullName>
    </alternativeName>
    <alternativeName>
        <fullName evidence="7">Protein IRREGULAR XYLEM 9 homolog L</fullName>
        <shortName evidence="5">OsIRX9L</shortName>
    </alternativeName>
</protein>
<keyword id="KW-0025">Alternative splicing</keyword>
<keyword id="KW-0961">Cell wall biogenesis/degradation</keyword>
<keyword id="KW-0325">Glycoprotein</keyword>
<keyword id="KW-0328">Glycosyltransferase</keyword>
<keyword id="KW-0333">Golgi apparatus</keyword>
<keyword id="KW-0472">Membrane</keyword>
<keyword id="KW-1185">Reference proteome</keyword>
<keyword id="KW-0735">Signal-anchor</keyword>
<keyword id="KW-0808">Transferase</keyword>
<keyword id="KW-0812">Transmembrane</keyword>
<keyword id="KW-1133">Transmembrane helix</keyword>
<gene>
    <name evidence="5" type="primary">IRX9L</name>
    <name evidence="6" type="synonym">GT43F</name>
    <name evidence="10" type="ordered locus">Os01g0675500</name>
    <name evidence="7" type="ordered locus">LOC_Os01g48440</name>
    <name evidence="9" type="ORF">OJ1117_G01.11</name>
    <name evidence="11" type="ORF">OsJ_02989</name>
    <name evidence="8" type="ORF">P0485G01.45</name>
</gene>
<feature type="chain" id="PRO_0000407554" description="Probable beta-1,4-xylosyltransferase IRX9L">
    <location>
        <begin position="1"/>
        <end position="446"/>
    </location>
</feature>
<feature type="topological domain" description="Cytoplasmic" evidence="7">
    <location>
        <begin position="1"/>
        <end position="85"/>
    </location>
</feature>
<feature type="transmembrane region" description="Helical; Signal-anchor for type II membrane protein" evidence="1">
    <location>
        <begin position="86"/>
        <end position="106"/>
    </location>
</feature>
<feature type="topological domain" description="Lumenal" evidence="7">
    <location>
        <begin position="107"/>
        <end position="446"/>
    </location>
</feature>
<feature type="region of interest" description="Disordered" evidence="2">
    <location>
        <begin position="1"/>
        <end position="26"/>
    </location>
</feature>
<feature type="glycosylation site" description="N-linked (GlcNAc...) asparagine" evidence="1">
    <location>
        <position position="185"/>
    </location>
</feature>
<feature type="glycosylation site" description="N-linked (GlcNAc...) asparagine" evidence="1">
    <location>
        <position position="258"/>
    </location>
</feature>
<feature type="glycosylation site" description="N-linked (GlcNAc...) asparagine" evidence="1">
    <location>
        <position position="361"/>
    </location>
</feature>
<feature type="glycosylation site" description="N-linked (GlcNAc...) asparagine" evidence="1">
    <location>
        <position position="411"/>
    </location>
</feature>
<feature type="splice variant" id="VSP_040955" description="In isoform 2." evidence="4">
    <original>ESRFIEKLVEDESQMEGL</original>
    <variation>LNTPFQDLVSSVNLLHNY</variation>
    <location>
        <begin position="391"/>
        <end position="408"/>
    </location>
</feature>
<feature type="splice variant" id="VSP_040956" description="In isoform 2." evidence="4">
    <location>
        <begin position="409"/>
        <end position="446"/>
    </location>
</feature>
<feature type="sequence conflict" description="In Ref. 7; AK069674." evidence="7" ref="7">
    <original>T</original>
    <variation>K</variation>
    <location>
        <position position="311"/>
    </location>
</feature>
<name>IRX9L_ORYSJ</name>
<comment type="function">
    <text evidence="3">Probable beta-1,4-xylosyltransferase involved in xylan biosynthesis in cell walls.</text>
</comment>
<comment type="subcellular location">
    <subcellularLocation>
        <location evidence="7">Golgi apparatus membrane</location>
        <topology evidence="1">Single-pass type II membrane protein</topology>
    </subcellularLocation>
</comment>
<comment type="alternative products">
    <event type="alternative splicing"/>
    <isoform>
        <id>Q5QM25-1</id>
        <name>1</name>
        <sequence type="displayed"/>
    </isoform>
    <isoform>
        <id>Q5QM25-2</id>
        <name>2</name>
        <sequence type="described" ref="VSP_040955 VSP_040956"/>
    </isoform>
</comment>
<comment type="similarity">
    <text evidence="7">Belongs to the glycosyltransferase 43 family.</text>
</comment>
<comment type="sequence caution" evidence="7">
    <conflict type="erroneous initiation">
        <sequence resource="EMBL-CDS" id="BAD73381"/>
    </conflict>
    <text>Truncated N-terminus.</text>
</comment>
<comment type="sequence caution" evidence="7">
    <conflict type="erroneous initiation">
        <sequence resource="EMBL-CDS" id="BAD73528"/>
    </conflict>
    <text>Truncated N-terminus.</text>
</comment>
<dbReference type="EC" id="2.4.2.-" evidence="7"/>
<dbReference type="EMBL" id="KJ206903">
    <property type="protein sequence ID" value="AHW98786.1"/>
    <property type="molecule type" value="mRNA"/>
</dbReference>
<dbReference type="EMBL" id="AP003264">
    <property type="protein sequence ID" value="BAD73380.1"/>
    <property type="molecule type" value="Genomic_DNA"/>
</dbReference>
<dbReference type="EMBL" id="AP003264">
    <property type="protein sequence ID" value="BAD73381.1"/>
    <property type="status" value="ALT_INIT"/>
    <property type="molecule type" value="Genomic_DNA"/>
</dbReference>
<dbReference type="EMBL" id="AP003374">
    <property type="protein sequence ID" value="BAD73527.1"/>
    <property type="molecule type" value="Genomic_DNA"/>
</dbReference>
<dbReference type="EMBL" id="AP003374">
    <property type="protein sequence ID" value="BAD73528.1"/>
    <property type="status" value="ALT_INIT"/>
    <property type="molecule type" value="Genomic_DNA"/>
</dbReference>
<dbReference type="EMBL" id="AP008207">
    <property type="protein sequence ID" value="BAF05760.1"/>
    <property type="molecule type" value="Genomic_DNA"/>
</dbReference>
<dbReference type="EMBL" id="AP014957">
    <property type="protein sequence ID" value="BAS73653.1"/>
    <property type="molecule type" value="Genomic_DNA"/>
</dbReference>
<dbReference type="EMBL" id="CM000138">
    <property type="protein sequence ID" value="EAZ13068.1"/>
    <property type="molecule type" value="Genomic_DNA"/>
</dbReference>
<dbReference type="EMBL" id="AK062112">
    <property type="status" value="NOT_ANNOTATED_CDS"/>
    <property type="molecule type" value="mRNA"/>
</dbReference>
<dbReference type="EMBL" id="AK069674">
    <property type="status" value="NOT_ANNOTATED_CDS"/>
    <property type="molecule type" value="mRNA"/>
</dbReference>
<dbReference type="RefSeq" id="NP_001384653.1">
    <molecule id="Q5QM25-1"/>
    <property type="nucleotide sequence ID" value="NM_001397724.1"/>
</dbReference>
<dbReference type="RefSeq" id="XP_015621593.1">
    <property type="nucleotide sequence ID" value="XM_015766107.1"/>
</dbReference>
<dbReference type="SMR" id="Q5QM25"/>
<dbReference type="FunCoup" id="Q5QM25">
    <property type="interactions" value="496"/>
</dbReference>
<dbReference type="STRING" id="39947.Q5QM25"/>
<dbReference type="GlyCosmos" id="Q5QM25">
    <property type="glycosylation" value="4 sites, No reported glycans"/>
</dbReference>
<dbReference type="PaxDb" id="39947-Q5QM25"/>
<dbReference type="EnsemblPlants" id="Os01t0675500-01">
    <molecule id="Q5QM25-1"/>
    <property type="protein sequence ID" value="Os01t0675500-01"/>
    <property type="gene ID" value="Os01g0675500"/>
</dbReference>
<dbReference type="GeneID" id="4325514"/>
<dbReference type="Gramene" id="Os01t0675500-01">
    <molecule id="Q5QM25-1"/>
    <property type="protein sequence ID" value="Os01t0675500-01"/>
    <property type="gene ID" value="Os01g0675500"/>
</dbReference>
<dbReference type="KEGG" id="dosa:Os01g0675500"/>
<dbReference type="eggNOG" id="KOG1476">
    <property type="taxonomic scope" value="Eukaryota"/>
</dbReference>
<dbReference type="HOGENOM" id="CLU_044006_0_0_1"/>
<dbReference type="InParanoid" id="Q5QM25"/>
<dbReference type="OMA" id="FIGFTPP"/>
<dbReference type="OrthoDB" id="675023at2759"/>
<dbReference type="Proteomes" id="UP000000763">
    <property type="component" value="Chromosome 1"/>
</dbReference>
<dbReference type="Proteomes" id="UP000007752">
    <property type="component" value="Chromosome 1"/>
</dbReference>
<dbReference type="Proteomes" id="UP000059680">
    <property type="component" value="Chromosome 1"/>
</dbReference>
<dbReference type="ExpressionAtlas" id="Q5QM25">
    <property type="expression patterns" value="baseline and differential"/>
</dbReference>
<dbReference type="GO" id="GO:0000139">
    <property type="term" value="C:Golgi membrane"/>
    <property type="evidence" value="ECO:0000318"/>
    <property type="project" value="GO_Central"/>
</dbReference>
<dbReference type="GO" id="GO:0015018">
    <property type="term" value="F:galactosylgalactosylxylosylprotein 3-beta-glucuronosyltransferase activity"/>
    <property type="evidence" value="ECO:0007669"/>
    <property type="project" value="InterPro"/>
</dbReference>
<dbReference type="GO" id="GO:0042285">
    <property type="term" value="F:xylosyltransferase activity"/>
    <property type="evidence" value="ECO:0000318"/>
    <property type="project" value="GO_Central"/>
</dbReference>
<dbReference type="GO" id="GO:0071555">
    <property type="term" value="P:cell wall organization"/>
    <property type="evidence" value="ECO:0007669"/>
    <property type="project" value="UniProtKB-KW"/>
</dbReference>
<dbReference type="GO" id="GO:0010417">
    <property type="term" value="P:glucuronoxylan biosynthetic process"/>
    <property type="evidence" value="ECO:0000318"/>
    <property type="project" value="GO_Central"/>
</dbReference>
<dbReference type="GO" id="GO:0009834">
    <property type="term" value="P:plant-type secondary cell wall biogenesis"/>
    <property type="evidence" value="ECO:0000318"/>
    <property type="project" value="GO_Central"/>
</dbReference>
<dbReference type="GO" id="GO:0045492">
    <property type="term" value="P:xylan biosynthetic process"/>
    <property type="evidence" value="ECO:0000314"/>
    <property type="project" value="UniProtKB"/>
</dbReference>
<dbReference type="CDD" id="cd00218">
    <property type="entry name" value="GlcAT-I"/>
    <property type="match status" value="1"/>
</dbReference>
<dbReference type="FunFam" id="3.90.550.10:FF:000064">
    <property type="entry name" value="Glycosyltransferases"/>
    <property type="match status" value="1"/>
</dbReference>
<dbReference type="Gene3D" id="3.90.550.10">
    <property type="entry name" value="Spore Coat Polysaccharide Biosynthesis Protein SpsA, Chain A"/>
    <property type="match status" value="1"/>
</dbReference>
<dbReference type="InterPro" id="IPR005027">
    <property type="entry name" value="Glyco_trans_43"/>
</dbReference>
<dbReference type="InterPro" id="IPR029044">
    <property type="entry name" value="Nucleotide-diphossugar_trans"/>
</dbReference>
<dbReference type="PANTHER" id="PTHR10896:SF20">
    <property type="entry name" value="BETA-1,4-XYLOSYLTRANSFERASE IRX9L-RELATED"/>
    <property type="match status" value="1"/>
</dbReference>
<dbReference type="PANTHER" id="PTHR10896">
    <property type="entry name" value="GALACTOSYLGALACTOSYLXYLOSYLPROTEIN 3-BETA-GLUCURONOSYLTRANSFERASE BETA-1,3-GLUCURONYLTRANSFERASE"/>
    <property type="match status" value="1"/>
</dbReference>
<dbReference type="Pfam" id="PF03360">
    <property type="entry name" value="Glyco_transf_43"/>
    <property type="match status" value="1"/>
</dbReference>
<dbReference type="SUPFAM" id="SSF53448">
    <property type="entry name" value="Nucleotide-diphospho-sugar transferases"/>
    <property type="match status" value="1"/>
</dbReference>
<proteinExistence type="evidence at transcript level"/>
<evidence type="ECO:0000255" key="1"/>
<evidence type="ECO:0000256" key="2">
    <source>
        <dbReference type="SAM" id="MobiDB-lite"/>
    </source>
</evidence>
<evidence type="ECO:0000269" key="3">
    <source>
    </source>
</evidence>
<evidence type="ECO:0000303" key="4">
    <source>
    </source>
</evidence>
<evidence type="ECO:0000303" key="5">
    <source>
    </source>
</evidence>
<evidence type="ECO:0000303" key="6">
    <source>
    </source>
</evidence>
<evidence type="ECO:0000305" key="7"/>
<evidence type="ECO:0000312" key="8">
    <source>
        <dbReference type="EMBL" id="BAD73380.1"/>
    </source>
</evidence>
<evidence type="ECO:0000312" key="9">
    <source>
        <dbReference type="EMBL" id="BAD73527.1"/>
    </source>
</evidence>
<evidence type="ECO:0000312" key="10">
    <source>
        <dbReference type="EMBL" id="BAS73653.1"/>
    </source>
</evidence>
<evidence type="ECO:0000312" key="11">
    <source>
        <dbReference type="EMBL" id="EAZ13068.1"/>
    </source>
</evidence>
<organism>
    <name type="scientific">Oryza sativa subsp. japonica</name>
    <name type="common">Rice</name>
    <dbReference type="NCBI Taxonomy" id="39947"/>
    <lineage>
        <taxon>Eukaryota</taxon>
        <taxon>Viridiplantae</taxon>
        <taxon>Streptophyta</taxon>
        <taxon>Embryophyta</taxon>
        <taxon>Tracheophyta</taxon>
        <taxon>Spermatophyta</taxon>
        <taxon>Magnoliopsida</taxon>
        <taxon>Liliopsida</taxon>
        <taxon>Poales</taxon>
        <taxon>Poaceae</taxon>
        <taxon>BOP clade</taxon>
        <taxon>Oryzoideae</taxon>
        <taxon>Oryzeae</taxon>
        <taxon>Oryzinae</taxon>
        <taxon>Oryza</taxon>
        <taxon>Oryza sativa</taxon>
    </lineage>
</organism>
<reference key="1">
    <citation type="journal article" date="2014" name="Plant Signal. Behav.">
        <title>Functional roles of rice glycosyltransferase family GT43 in xylan biosynthesis.</title>
        <authorList>
            <person name="Lee C."/>
            <person name="Teng Q."/>
            <person name="Zhong R."/>
            <person name="Yuan Y."/>
            <person name="Ye Z.H."/>
        </authorList>
    </citation>
    <scope>NUCLEOTIDE SEQUENCE [MRNA]</scope>
</reference>
<reference key="2">
    <citation type="journal article" date="2002" name="Nature">
        <title>The genome sequence and structure of rice chromosome 1.</title>
        <authorList>
            <person name="Sasaki T."/>
            <person name="Matsumoto T."/>
            <person name="Yamamoto K."/>
            <person name="Sakata K."/>
            <person name="Baba T."/>
            <person name="Katayose Y."/>
            <person name="Wu J."/>
            <person name="Niimura Y."/>
            <person name="Cheng Z."/>
            <person name="Nagamura Y."/>
            <person name="Antonio B.A."/>
            <person name="Kanamori H."/>
            <person name="Hosokawa S."/>
            <person name="Masukawa M."/>
            <person name="Arikawa K."/>
            <person name="Chiden Y."/>
            <person name="Hayashi M."/>
            <person name="Okamoto M."/>
            <person name="Ando T."/>
            <person name="Aoki H."/>
            <person name="Arita K."/>
            <person name="Hamada M."/>
            <person name="Harada C."/>
            <person name="Hijishita S."/>
            <person name="Honda M."/>
            <person name="Ichikawa Y."/>
            <person name="Idonuma A."/>
            <person name="Iijima M."/>
            <person name="Ikeda M."/>
            <person name="Ikeno M."/>
            <person name="Ito S."/>
            <person name="Ito T."/>
            <person name="Ito Y."/>
            <person name="Ito Y."/>
            <person name="Iwabuchi A."/>
            <person name="Kamiya K."/>
            <person name="Karasawa W."/>
            <person name="Katagiri S."/>
            <person name="Kikuta A."/>
            <person name="Kobayashi N."/>
            <person name="Kono I."/>
            <person name="Machita K."/>
            <person name="Maehara T."/>
            <person name="Mizuno H."/>
            <person name="Mizubayashi T."/>
            <person name="Mukai Y."/>
            <person name="Nagasaki H."/>
            <person name="Nakashima M."/>
            <person name="Nakama Y."/>
            <person name="Nakamichi Y."/>
            <person name="Nakamura M."/>
            <person name="Namiki N."/>
            <person name="Negishi M."/>
            <person name="Ohta I."/>
            <person name="Ono N."/>
            <person name="Saji S."/>
            <person name="Sakai K."/>
            <person name="Shibata M."/>
            <person name="Shimokawa T."/>
            <person name="Shomura A."/>
            <person name="Song J."/>
            <person name="Takazaki Y."/>
            <person name="Terasawa K."/>
            <person name="Tsuji K."/>
            <person name="Waki K."/>
            <person name="Yamagata H."/>
            <person name="Yamane H."/>
            <person name="Yoshiki S."/>
            <person name="Yoshihara R."/>
            <person name="Yukawa K."/>
            <person name="Zhong H."/>
            <person name="Iwama H."/>
            <person name="Endo T."/>
            <person name="Ito H."/>
            <person name="Hahn J.H."/>
            <person name="Kim H.-I."/>
            <person name="Eun M.-Y."/>
            <person name="Yano M."/>
            <person name="Jiang J."/>
            <person name="Gojobori T."/>
        </authorList>
    </citation>
    <scope>NUCLEOTIDE SEQUENCE [LARGE SCALE GENOMIC DNA]</scope>
    <source>
        <strain>cv. Nipponbare</strain>
    </source>
</reference>
<reference key="3">
    <citation type="journal article" date="2005" name="Nature">
        <title>The map-based sequence of the rice genome.</title>
        <authorList>
            <consortium name="International rice genome sequencing project (IRGSP)"/>
        </authorList>
    </citation>
    <scope>NUCLEOTIDE SEQUENCE [LARGE SCALE GENOMIC DNA]</scope>
    <source>
        <strain>cv. Nipponbare</strain>
    </source>
</reference>
<reference key="4">
    <citation type="journal article" date="2008" name="Nucleic Acids Res.">
        <title>The rice annotation project database (RAP-DB): 2008 update.</title>
        <authorList>
            <consortium name="The rice annotation project (RAP)"/>
        </authorList>
    </citation>
    <scope>GENOME REANNOTATION</scope>
    <source>
        <strain>cv. Nipponbare</strain>
    </source>
</reference>
<reference key="5">
    <citation type="journal article" date="2013" name="Rice">
        <title>Improvement of the Oryza sativa Nipponbare reference genome using next generation sequence and optical map data.</title>
        <authorList>
            <person name="Kawahara Y."/>
            <person name="de la Bastide M."/>
            <person name="Hamilton J.P."/>
            <person name="Kanamori H."/>
            <person name="McCombie W.R."/>
            <person name="Ouyang S."/>
            <person name="Schwartz D.C."/>
            <person name="Tanaka T."/>
            <person name="Wu J."/>
            <person name="Zhou S."/>
            <person name="Childs K.L."/>
            <person name="Davidson R.M."/>
            <person name="Lin H."/>
            <person name="Quesada-Ocampo L."/>
            <person name="Vaillancourt B."/>
            <person name="Sakai H."/>
            <person name="Lee S.S."/>
            <person name="Kim J."/>
            <person name="Numa H."/>
            <person name="Itoh T."/>
            <person name="Buell C.R."/>
            <person name="Matsumoto T."/>
        </authorList>
    </citation>
    <scope>GENOME REANNOTATION</scope>
    <source>
        <strain>cv. Nipponbare</strain>
    </source>
</reference>
<reference key="6">
    <citation type="journal article" date="2005" name="PLoS Biol.">
        <title>The genomes of Oryza sativa: a history of duplications.</title>
        <authorList>
            <person name="Yu J."/>
            <person name="Wang J."/>
            <person name="Lin W."/>
            <person name="Li S."/>
            <person name="Li H."/>
            <person name="Zhou J."/>
            <person name="Ni P."/>
            <person name="Dong W."/>
            <person name="Hu S."/>
            <person name="Zeng C."/>
            <person name="Zhang J."/>
            <person name="Zhang Y."/>
            <person name="Li R."/>
            <person name="Xu Z."/>
            <person name="Li S."/>
            <person name="Li X."/>
            <person name="Zheng H."/>
            <person name="Cong L."/>
            <person name="Lin L."/>
            <person name="Yin J."/>
            <person name="Geng J."/>
            <person name="Li G."/>
            <person name="Shi J."/>
            <person name="Liu J."/>
            <person name="Lv H."/>
            <person name="Li J."/>
            <person name="Wang J."/>
            <person name="Deng Y."/>
            <person name="Ran L."/>
            <person name="Shi X."/>
            <person name="Wang X."/>
            <person name="Wu Q."/>
            <person name="Li C."/>
            <person name="Ren X."/>
            <person name="Wang J."/>
            <person name="Wang X."/>
            <person name="Li D."/>
            <person name="Liu D."/>
            <person name="Zhang X."/>
            <person name="Ji Z."/>
            <person name="Zhao W."/>
            <person name="Sun Y."/>
            <person name="Zhang Z."/>
            <person name="Bao J."/>
            <person name="Han Y."/>
            <person name="Dong L."/>
            <person name="Ji J."/>
            <person name="Chen P."/>
            <person name="Wu S."/>
            <person name="Liu J."/>
            <person name="Xiao Y."/>
            <person name="Bu D."/>
            <person name="Tan J."/>
            <person name="Yang L."/>
            <person name="Ye C."/>
            <person name="Zhang J."/>
            <person name="Xu J."/>
            <person name="Zhou Y."/>
            <person name="Yu Y."/>
            <person name="Zhang B."/>
            <person name="Zhuang S."/>
            <person name="Wei H."/>
            <person name="Liu B."/>
            <person name="Lei M."/>
            <person name="Yu H."/>
            <person name="Li Y."/>
            <person name="Xu H."/>
            <person name="Wei S."/>
            <person name="He X."/>
            <person name="Fang L."/>
            <person name="Zhang Z."/>
            <person name="Zhang Y."/>
            <person name="Huang X."/>
            <person name="Su Z."/>
            <person name="Tong W."/>
            <person name="Li J."/>
            <person name="Tong Z."/>
            <person name="Li S."/>
            <person name="Ye J."/>
            <person name="Wang L."/>
            <person name="Fang L."/>
            <person name="Lei T."/>
            <person name="Chen C.-S."/>
            <person name="Chen H.-C."/>
            <person name="Xu Z."/>
            <person name="Li H."/>
            <person name="Huang H."/>
            <person name="Zhang F."/>
            <person name="Xu H."/>
            <person name="Li N."/>
            <person name="Zhao C."/>
            <person name="Li S."/>
            <person name="Dong L."/>
            <person name="Huang Y."/>
            <person name="Li L."/>
            <person name="Xi Y."/>
            <person name="Qi Q."/>
            <person name="Li W."/>
            <person name="Zhang B."/>
            <person name="Hu W."/>
            <person name="Zhang Y."/>
            <person name="Tian X."/>
            <person name="Jiao Y."/>
            <person name="Liang X."/>
            <person name="Jin J."/>
            <person name="Gao L."/>
            <person name="Zheng W."/>
            <person name="Hao B."/>
            <person name="Liu S.-M."/>
            <person name="Wang W."/>
            <person name="Yuan L."/>
            <person name="Cao M."/>
            <person name="McDermott J."/>
            <person name="Samudrala R."/>
            <person name="Wang J."/>
            <person name="Wong G.K.-S."/>
            <person name="Yang H."/>
        </authorList>
    </citation>
    <scope>NUCLEOTIDE SEQUENCE [LARGE SCALE GENOMIC DNA]</scope>
    <source>
        <strain>cv. Nipponbare</strain>
    </source>
</reference>
<reference key="7">
    <citation type="journal article" date="2003" name="Science">
        <title>Collection, mapping, and annotation of over 28,000 cDNA clones from japonica rice.</title>
        <authorList>
            <consortium name="The rice full-length cDNA consortium"/>
        </authorList>
    </citation>
    <scope>NUCLEOTIDE SEQUENCE [LARGE SCALE MRNA] (ISOFORMS 1 AND 2)</scope>
    <source>
        <strain>cv. Nipponbare</strain>
    </source>
</reference>
<reference key="8">
    <citation type="journal article" date="2013" name="Front. Plant Sci.">
        <title>Three novel rice genes closely related to the Arabidopsis IRX9, IRX9L, and IRX14 genes and their roles in xylan biosynthesis.</title>
        <authorList>
            <person name="Chiniquy D."/>
            <person name="Varanasi P."/>
            <person name="Oh T."/>
            <person name="Harholt J."/>
            <person name="Katnelson J."/>
            <person name="Singh S."/>
            <person name="Auer M."/>
            <person name="Simmons B."/>
            <person name="Adams P.D."/>
            <person name="Scheller H.V."/>
            <person name="Ronald P.C."/>
        </authorList>
    </citation>
    <scope>FUNCTION</scope>
</reference>
<sequence length="446" mass="50318">MSRRNAGAMQREGSVKDWEEFDPSPSPKLAYSQSYVAMRGLLTSVASLDLVLMSSSLKSAWAAISSHKHARSLERSRSKGMSLKRAMLQLLVCFMVGIFIGFTPPFSVDLPGKIASENGRLPFDGDAIDRRQMVERQGTKLEPFVAEAESEASSEPQVEEGPPVPAMLDDEADFVEASPIVHSVNDSGIVVRKHLIIITTTSVRPHQAYYLNRLAHVLKDVPPPLLWIVAEWPYQSRETAEILRSSGIMYRHLICNRNTTNIRKIVVCQKNNAIFHIKKHRLDGIVHFADEERAYSADLFEEMRKIRRFGTWPVAIHVGTKYRVVLEGPVCKGNQVTGWHTNQRRGVSRRFPIGFSGFAFNSTILWDPQRWNSPTLESIIVHSGGRGGLQESRFIEKLVEDESQMEGLGDNCTRVMVWNFELEPPQVNYPIGWLLQRNLDAVVPIT</sequence>
<accession>Q5QM25</accession>
<accession>A0A023ND33</accession>
<accession>Q5QM24</accession>